<evidence type="ECO:0000250" key="1"/>
<evidence type="ECO:0000255" key="2">
    <source>
        <dbReference type="PROSITE-ProRule" id="PRU01175"/>
    </source>
</evidence>
<evidence type="ECO:0000305" key="3"/>
<organism>
    <name type="scientific">Danio rerio</name>
    <name type="common">Zebrafish</name>
    <name type="synonym">Brachydanio rerio</name>
    <dbReference type="NCBI Taxonomy" id="7955"/>
    <lineage>
        <taxon>Eukaryota</taxon>
        <taxon>Metazoa</taxon>
        <taxon>Chordata</taxon>
        <taxon>Craniata</taxon>
        <taxon>Vertebrata</taxon>
        <taxon>Euteleostomi</taxon>
        <taxon>Actinopterygii</taxon>
        <taxon>Neopterygii</taxon>
        <taxon>Teleostei</taxon>
        <taxon>Ostariophysi</taxon>
        <taxon>Cypriniformes</taxon>
        <taxon>Danionidae</taxon>
        <taxon>Danioninae</taxon>
        <taxon>Danio</taxon>
    </lineage>
</organism>
<accession>Q568P1</accession>
<reference key="1">
    <citation type="submission" date="2005-04" db="EMBL/GenBank/DDBJ databases">
        <authorList>
            <consortium name="NIH - Zebrafish Gene Collection (ZGC) project"/>
        </authorList>
    </citation>
    <scope>NUCLEOTIDE SEQUENCE [LARGE SCALE MRNA]</scope>
</reference>
<dbReference type="EC" id="3.1.7.2"/>
<dbReference type="EMBL" id="BC092780">
    <property type="protein sequence ID" value="AAH92780.1"/>
    <property type="molecule type" value="mRNA"/>
</dbReference>
<dbReference type="RefSeq" id="NP_001017835.1">
    <property type="nucleotide sequence ID" value="NM_001017835.1"/>
</dbReference>
<dbReference type="SMR" id="Q568P1"/>
<dbReference type="FunCoup" id="Q568P1">
    <property type="interactions" value="276"/>
</dbReference>
<dbReference type="STRING" id="7955.ENSDARP00000033279"/>
<dbReference type="PaxDb" id="7955-ENSDARP00000033279"/>
<dbReference type="GeneID" id="550533"/>
<dbReference type="KEGG" id="dre:550533"/>
<dbReference type="AGR" id="ZFIN:ZDB-GENE-050417-377"/>
<dbReference type="CTD" id="374659"/>
<dbReference type="ZFIN" id="ZDB-GENE-050417-377">
    <property type="gene designation" value="hddc3"/>
</dbReference>
<dbReference type="eggNOG" id="KOG1157">
    <property type="taxonomic scope" value="Eukaryota"/>
</dbReference>
<dbReference type="InParanoid" id="Q568P1"/>
<dbReference type="OrthoDB" id="430679at2759"/>
<dbReference type="PhylomeDB" id="Q568P1"/>
<dbReference type="PRO" id="PR:Q568P1"/>
<dbReference type="Proteomes" id="UP000000437">
    <property type="component" value="Chromosome 7"/>
</dbReference>
<dbReference type="GO" id="GO:0008893">
    <property type="term" value="F:guanosine-3',5'-bis(diphosphate) 3'-diphosphatase activity"/>
    <property type="evidence" value="ECO:0000318"/>
    <property type="project" value="GO_Central"/>
</dbReference>
<dbReference type="GO" id="GO:0046872">
    <property type="term" value="F:metal ion binding"/>
    <property type="evidence" value="ECO:0007669"/>
    <property type="project" value="UniProtKB-KW"/>
</dbReference>
<dbReference type="CDD" id="cd00077">
    <property type="entry name" value="HDc"/>
    <property type="match status" value="1"/>
</dbReference>
<dbReference type="FunFam" id="1.10.3210.10:FF:000012">
    <property type="entry name" value="HD domain containing 3"/>
    <property type="match status" value="1"/>
</dbReference>
<dbReference type="Gene3D" id="1.10.3210.10">
    <property type="entry name" value="Hypothetical protein af1432"/>
    <property type="match status" value="1"/>
</dbReference>
<dbReference type="InterPro" id="IPR003607">
    <property type="entry name" value="HD/PDEase_dom"/>
</dbReference>
<dbReference type="InterPro" id="IPR006674">
    <property type="entry name" value="HD_domain"/>
</dbReference>
<dbReference type="InterPro" id="IPR052194">
    <property type="entry name" value="MESH1"/>
</dbReference>
<dbReference type="PANTHER" id="PTHR46246">
    <property type="entry name" value="GUANOSINE-3',5'-BIS(DIPHOSPHATE) 3'-PYROPHOSPHOHYDROLASE MESH1"/>
    <property type="match status" value="1"/>
</dbReference>
<dbReference type="PANTHER" id="PTHR46246:SF1">
    <property type="entry name" value="GUANOSINE-3',5'-BIS(DIPHOSPHATE) 3'-PYROPHOSPHOHYDROLASE MESH1"/>
    <property type="match status" value="1"/>
</dbReference>
<dbReference type="Pfam" id="PF13328">
    <property type="entry name" value="HD_4"/>
    <property type="match status" value="1"/>
</dbReference>
<dbReference type="SMART" id="SM00471">
    <property type="entry name" value="HDc"/>
    <property type="match status" value="1"/>
</dbReference>
<dbReference type="SUPFAM" id="SSF109604">
    <property type="entry name" value="HD-domain/PDEase-like"/>
    <property type="match status" value="1"/>
</dbReference>
<dbReference type="PROSITE" id="PS51831">
    <property type="entry name" value="HD"/>
    <property type="match status" value="1"/>
</dbReference>
<feature type="chain" id="PRO_0000263112" description="Guanosine-3',5'-bis(diphosphate) 3'-pyrophosphohydrolase MESH1">
    <location>
        <begin position="1"/>
        <end position="180"/>
    </location>
</feature>
<feature type="domain" description="HD" evidence="2">
    <location>
        <begin position="33"/>
        <end position="128"/>
    </location>
</feature>
<feature type="active site" description="Nucleophile" evidence="1">
    <location>
        <position position="66"/>
    </location>
</feature>
<feature type="active site" description="Nucleophile" evidence="1">
    <location>
        <position position="67"/>
    </location>
</feature>
<feature type="binding site" evidence="1">
    <location>
        <position position="36"/>
    </location>
    <ligand>
        <name>Mn(2+)</name>
        <dbReference type="ChEBI" id="CHEBI:29035"/>
    </ligand>
</feature>
<feature type="binding site" evidence="1">
    <location>
        <position position="62"/>
    </location>
    <ligand>
        <name>Mn(2+)</name>
        <dbReference type="ChEBI" id="CHEBI:29035"/>
    </ligand>
</feature>
<feature type="binding site" evidence="1">
    <location>
        <position position="63"/>
    </location>
    <ligand>
        <name>Mn(2+)</name>
        <dbReference type="ChEBI" id="CHEBI:29035"/>
    </ligand>
</feature>
<feature type="binding site" evidence="1">
    <location>
        <position position="123"/>
    </location>
    <ligand>
        <name>Mn(2+)</name>
        <dbReference type="ChEBI" id="CHEBI:29035"/>
    </ligand>
</feature>
<comment type="function">
    <text evidence="1">ppGpp hydrolyzing enzyme involved in starvation response.</text>
</comment>
<comment type="catalytic activity">
    <reaction>
        <text>guanosine 3',5'-bis(diphosphate) + H2O = GDP + diphosphate + H(+)</text>
        <dbReference type="Rhea" id="RHEA:14253"/>
        <dbReference type="ChEBI" id="CHEBI:15377"/>
        <dbReference type="ChEBI" id="CHEBI:15378"/>
        <dbReference type="ChEBI" id="CHEBI:33019"/>
        <dbReference type="ChEBI" id="CHEBI:58189"/>
        <dbReference type="ChEBI" id="CHEBI:77828"/>
        <dbReference type="EC" id="3.1.7.2"/>
    </reaction>
</comment>
<comment type="cofactor">
    <cofactor evidence="1">
        <name>Mn(2+)</name>
        <dbReference type="ChEBI" id="CHEBI:29035"/>
    </cofactor>
</comment>
<comment type="similarity">
    <text evidence="3">Belongs to the MESH1 family.</text>
</comment>
<sequence length="180" mass="20296">MNCSSTAVLLETVNFAAEKHRNQRHKDPEGTPYINHPIGVARILSHEGEITDVEVIQAALLHDTVEDTDTTFEELESVFGATVARIVQGVTDDKSLPKAERERQQVEHAPHCSHQAKLVKLADKLYNLRDLNRCTPEGWSAQRVQEYFEWASQVVKGLRGTNAAIEEKLQQLFLERGVKL</sequence>
<protein>
    <recommendedName>
        <fullName>Guanosine-3',5'-bis(diphosphate) 3'-pyrophosphohydrolase MESH1</fullName>
        <ecNumber>3.1.7.2</ecNumber>
    </recommendedName>
    <alternativeName>
        <fullName>HD domain-containing protein 3</fullName>
    </alternativeName>
    <alternativeName>
        <fullName>Metazoan SpoT homolog 1</fullName>
        <shortName>MESH1</shortName>
    </alternativeName>
    <alternativeName>
        <fullName>Penta-phosphate guanosine-3'-pyrophosphohydrolase</fullName>
        <shortName>(ppGpp)ase</shortName>
    </alternativeName>
</protein>
<keyword id="KW-0378">Hydrolase</keyword>
<keyword id="KW-0464">Manganese</keyword>
<keyword id="KW-0479">Metal-binding</keyword>
<keyword id="KW-1185">Reference proteome</keyword>
<proteinExistence type="evidence at transcript level"/>
<gene>
    <name type="primary">hddc3</name>
    <name type="synonym">Mesh1</name>
    <name type="ORF">zgc:110184</name>
</gene>
<name>MESH1_DANRE</name>